<reference key="1">
    <citation type="journal article" date="2003" name="J. Bacteriol.">
        <title>Complete genome sequence of the oral pathogenic bacterium Porphyromonas gingivalis strain W83.</title>
        <authorList>
            <person name="Nelson K.E."/>
            <person name="Fleischmann R.D."/>
            <person name="DeBoy R.T."/>
            <person name="Paulsen I.T."/>
            <person name="Fouts D.E."/>
            <person name="Eisen J.A."/>
            <person name="Daugherty S.C."/>
            <person name="Dodson R.J."/>
            <person name="Durkin A.S."/>
            <person name="Gwinn M.L."/>
            <person name="Haft D.H."/>
            <person name="Kolonay J.F."/>
            <person name="Nelson W.C."/>
            <person name="Mason T.M."/>
            <person name="Tallon L."/>
            <person name="Gray J."/>
            <person name="Granger D."/>
            <person name="Tettelin H."/>
            <person name="Dong H."/>
            <person name="Galvin J.L."/>
            <person name="Duncan M.J."/>
            <person name="Dewhirst F.E."/>
            <person name="Fraser C.M."/>
        </authorList>
    </citation>
    <scope>NUCLEOTIDE SEQUENCE [LARGE SCALE GENOMIC DNA]</scope>
    <source>
        <strain>ATCC BAA-308 / W83</strain>
    </source>
</reference>
<gene>
    <name evidence="1" type="primary">rpsD</name>
    <name type="ordered locus">PG_1912</name>
</gene>
<feature type="chain" id="PRO_0000132433" description="Small ribosomal subunit protein uS4">
    <location>
        <begin position="1"/>
        <end position="201"/>
    </location>
</feature>
<feature type="domain" description="S4 RNA-binding" evidence="1">
    <location>
        <begin position="92"/>
        <end position="154"/>
    </location>
</feature>
<feature type="region of interest" description="Disordered" evidence="2">
    <location>
        <begin position="26"/>
        <end position="47"/>
    </location>
</feature>
<keyword id="KW-1185">Reference proteome</keyword>
<keyword id="KW-0687">Ribonucleoprotein</keyword>
<keyword id="KW-0689">Ribosomal protein</keyword>
<keyword id="KW-0694">RNA-binding</keyword>
<keyword id="KW-0699">rRNA-binding</keyword>
<comment type="function">
    <text evidence="1">One of the primary rRNA binding proteins, it binds directly to 16S rRNA where it nucleates assembly of the body of the 30S subunit.</text>
</comment>
<comment type="function">
    <text evidence="1">With S5 and S12 plays an important role in translational accuracy.</text>
</comment>
<comment type="subunit">
    <text evidence="1">Part of the 30S ribosomal subunit. Contacts protein S5. The interaction surface between S4 and S5 is involved in control of translational fidelity.</text>
</comment>
<comment type="similarity">
    <text evidence="1">Belongs to the universal ribosomal protein uS4 family.</text>
</comment>
<proteinExistence type="inferred from homology"/>
<sequence length="201" mass="22927">MARYTGPKSKIARKFGDPIFGADKVLSKKNYPPGQHGNNRRRKTSEYGLQLREKQKAKYTYGVLEKQFRHLFHRAQRAKGVTGELLIQFLEARLDNVVFRLGIAPTRSAARQLVSHRHITVDGSVVNIPSYSVKPGQVIGVRERSKSLEVIADALTGFNHSKYPWMEWDQSSLSGKLLHMPDRTDIPENIKEQLIVELYSK</sequence>
<evidence type="ECO:0000255" key="1">
    <source>
        <dbReference type="HAMAP-Rule" id="MF_01306"/>
    </source>
</evidence>
<evidence type="ECO:0000256" key="2">
    <source>
        <dbReference type="SAM" id="MobiDB-lite"/>
    </source>
</evidence>
<evidence type="ECO:0000305" key="3"/>
<dbReference type="EMBL" id="AE015924">
    <property type="protein sequence ID" value="AAQ66893.1"/>
    <property type="molecule type" value="Genomic_DNA"/>
</dbReference>
<dbReference type="RefSeq" id="WP_004583573.1">
    <property type="nucleotide sequence ID" value="NC_002950.2"/>
</dbReference>
<dbReference type="SMR" id="Q7MTN9"/>
<dbReference type="STRING" id="242619.PG_1912"/>
<dbReference type="EnsemblBacteria" id="AAQ66893">
    <property type="protein sequence ID" value="AAQ66893"/>
    <property type="gene ID" value="PG_1912"/>
</dbReference>
<dbReference type="GeneID" id="29256994"/>
<dbReference type="GeneID" id="57239570"/>
<dbReference type="KEGG" id="pgi:PG_1912"/>
<dbReference type="eggNOG" id="COG0522">
    <property type="taxonomic scope" value="Bacteria"/>
</dbReference>
<dbReference type="HOGENOM" id="CLU_092403_0_2_10"/>
<dbReference type="Proteomes" id="UP000000588">
    <property type="component" value="Chromosome"/>
</dbReference>
<dbReference type="GO" id="GO:0015935">
    <property type="term" value="C:small ribosomal subunit"/>
    <property type="evidence" value="ECO:0007669"/>
    <property type="project" value="InterPro"/>
</dbReference>
<dbReference type="GO" id="GO:0019843">
    <property type="term" value="F:rRNA binding"/>
    <property type="evidence" value="ECO:0007669"/>
    <property type="project" value="UniProtKB-UniRule"/>
</dbReference>
<dbReference type="GO" id="GO:0003735">
    <property type="term" value="F:structural constituent of ribosome"/>
    <property type="evidence" value="ECO:0007669"/>
    <property type="project" value="InterPro"/>
</dbReference>
<dbReference type="GO" id="GO:0042274">
    <property type="term" value="P:ribosomal small subunit biogenesis"/>
    <property type="evidence" value="ECO:0007669"/>
    <property type="project" value="TreeGrafter"/>
</dbReference>
<dbReference type="GO" id="GO:0006412">
    <property type="term" value="P:translation"/>
    <property type="evidence" value="ECO:0007669"/>
    <property type="project" value="UniProtKB-UniRule"/>
</dbReference>
<dbReference type="CDD" id="cd00165">
    <property type="entry name" value="S4"/>
    <property type="match status" value="1"/>
</dbReference>
<dbReference type="FunFam" id="1.10.1050.10:FF:000001">
    <property type="entry name" value="30S ribosomal protein S4"/>
    <property type="match status" value="1"/>
</dbReference>
<dbReference type="FunFam" id="3.10.290.10:FF:000001">
    <property type="entry name" value="30S ribosomal protein S4"/>
    <property type="match status" value="1"/>
</dbReference>
<dbReference type="Gene3D" id="1.10.1050.10">
    <property type="entry name" value="Ribosomal Protein S4 Delta 41, Chain A, domain 1"/>
    <property type="match status" value="1"/>
</dbReference>
<dbReference type="Gene3D" id="3.10.290.10">
    <property type="entry name" value="RNA-binding S4 domain"/>
    <property type="match status" value="1"/>
</dbReference>
<dbReference type="HAMAP" id="MF_01306_B">
    <property type="entry name" value="Ribosomal_uS4_B"/>
    <property type="match status" value="1"/>
</dbReference>
<dbReference type="InterPro" id="IPR022801">
    <property type="entry name" value="Ribosomal_uS4"/>
</dbReference>
<dbReference type="InterPro" id="IPR005709">
    <property type="entry name" value="Ribosomal_uS4_bac-type"/>
</dbReference>
<dbReference type="InterPro" id="IPR018079">
    <property type="entry name" value="Ribosomal_uS4_CS"/>
</dbReference>
<dbReference type="InterPro" id="IPR001912">
    <property type="entry name" value="Ribosomal_uS4_N"/>
</dbReference>
<dbReference type="InterPro" id="IPR002942">
    <property type="entry name" value="S4_RNA-bd"/>
</dbReference>
<dbReference type="InterPro" id="IPR036986">
    <property type="entry name" value="S4_RNA-bd_sf"/>
</dbReference>
<dbReference type="NCBIfam" id="NF003717">
    <property type="entry name" value="PRK05327.1"/>
    <property type="match status" value="1"/>
</dbReference>
<dbReference type="NCBIfam" id="TIGR01017">
    <property type="entry name" value="rpsD_bact"/>
    <property type="match status" value="1"/>
</dbReference>
<dbReference type="PANTHER" id="PTHR11831">
    <property type="entry name" value="30S 40S RIBOSOMAL PROTEIN"/>
    <property type="match status" value="1"/>
</dbReference>
<dbReference type="PANTHER" id="PTHR11831:SF4">
    <property type="entry name" value="SMALL RIBOSOMAL SUBUNIT PROTEIN US4M"/>
    <property type="match status" value="1"/>
</dbReference>
<dbReference type="Pfam" id="PF00163">
    <property type="entry name" value="Ribosomal_S4"/>
    <property type="match status" value="1"/>
</dbReference>
<dbReference type="Pfam" id="PF01479">
    <property type="entry name" value="S4"/>
    <property type="match status" value="1"/>
</dbReference>
<dbReference type="SMART" id="SM01390">
    <property type="entry name" value="Ribosomal_S4"/>
    <property type="match status" value="1"/>
</dbReference>
<dbReference type="SMART" id="SM00363">
    <property type="entry name" value="S4"/>
    <property type="match status" value="1"/>
</dbReference>
<dbReference type="SUPFAM" id="SSF55174">
    <property type="entry name" value="Alpha-L RNA-binding motif"/>
    <property type="match status" value="1"/>
</dbReference>
<dbReference type="PROSITE" id="PS00632">
    <property type="entry name" value="RIBOSOMAL_S4"/>
    <property type="match status" value="1"/>
</dbReference>
<dbReference type="PROSITE" id="PS50889">
    <property type="entry name" value="S4"/>
    <property type="match status" value="1"/>
</dbReference>
<protein>
    <recommendedName>
        <fullName evidence="1">Small ribosomal subunit protein uS4</fullName>
    </recommendedName>
    <alternativeName>
        <fullName evidence="3">30S ribosomal protein S4</fullName>
    </alternativeName>
</protein>
<accession>Q7MTN9</accession>
<organism>
    <name type="scientific">Porphyromonas gingivalis (strain ATCC BAA-308 / W83)</name>
    <dbReference type="NCBI Taxonomy" id="242619"/>
    <lineage>
        <taxon>Bacteria</taxon>
        <taxon>Pseudomonadati</taxon>
        <taxon>Bacteroidota</taxon>
        <taxon>Bacteroidia</taxon>
        <taxon>Bacteroidales</taxon>
        <taxon>Porphyromonadaceae</taxon>
        <taxon>Porphyromonas</taxon>
    </lineage>
</organism>
<name>RS4_PORGI</name>